<keyword id="KW-0002">3D-structure</keyword>
<keyword id="KW-0028">Amino-acid biosynthesis</keyword>
<keyword id="KW-0055">Arginine biosynthesis</keyword>
<keyword id="KW-0963">Cytoplasm</keyword>
<keyword id="KW-0238">DNA-binding</keyword>
<keyword id="KW-1185">Reference proteome</keyword>
<keyword id="KW-0678">Repressor</keyword>
<keyword id="KW-0804">Transcription</keyword>
<keyword id="KW-0805">Transcription regulation</keyword>
<protein>
    <recommendedName>
        <fullName>Arginine repressor</fullName>
    </recommendedName>
</protein>
<dbReference type="EMBL" id="AL123456">
    <property type="protein sequence ID" value="CCP44422.1"/>
    <property type="molecule type" value="Genomic_DNA"/>
</dbReference>
<dbReference type="PIR" id="D70621">
    <property type="entry name" value="D70621"/>
</dbReference>
<dbReference type="RefSeq" id="NP_216173.1">
    <property type="nucleotide sequence ID" value="NC_000962.3"/>
</dbReference>
<dbReference type="RefSeq" id="WP_003408178.1">
    <property type="nucleotide sequence ID" value="NZ_NVQJ01000069.1"/>
</dbReference>
<dbReference type="PDB" id="2ZFZ">
    <property type="method" value="X-ray"/>
    <property type="resolution" value="1.85 A"/>
    <property type="chains" value="A/B/C/D/E/F=92-170"/>
</dbReference>
<dbReference type="PDB" id="3BUE">
    <property type="method" value="X-ray"/>
    <property type="resolution" value="2.15 A"/>
    <property type="chains" value="A/B/C/D/E/F=92-170"/>
</dbReference>
<dbReference type="PDB" id="3CAG">
    <property type="method" value="X-ray"/>
    <property type="resolution" value="1.90 A"/>
    <property type="chains" value="A/B/C/D/E/F=92-170"/>
</dbReference>
<dbReference type="PDB" id="3ERE">
    <property type="method" value="X-ray"/>
    <property type="resolution" value="2.50 A"/>
    <property type="chains" value="D=1-170"/>
</dbReference>
<dbReference type="PDB" id="3FHZ">
    <property type="method" value="X-ray"/>
    <property type="resolution" value="3.27 A"/>
    <property type="chains" value="A/B/C/D/E/F=1-170"/>
</dbReference>
<dbReference type="PDB" id="3LAJ">
    <property type="method" value="X-ray"/>
    <property type="resolution" value="2.31 A"/>
    <property type="chains" value="A/B/C/D/E/F=1-170"/>
</dbReference>
<dbReference type="PDB" id="3LAP">
    <property type="method" value="X-ray"/>
    <property type="resolution" value="2.15 A"/>
    <property type="chains" value="A/B/C/D/E/F=1-170"/>
</dbReference>
<dbReference type="PDBsum" id="2ZFZ"/>
<dbReference type="PDBsum" id="3BUE"/>
<dbReference type="PDBsum" id="3CAG"/>
<dbReference type="PDBsum" id="3ERE"/>
<dbReference type="PDBsum" id="3FHZ"/>
<dbReference type="PDBsum" id="3LAJ"/>
<dbReference type="PDBsum" id="3LAP"/>
<dbReference type="SMR" id="P9WPY9"/>
<dbReference type="FunCoup" id="P9WPY9">
    <property type="interactions" value="3"/>
</dbReference>
<dbReference type="STRING" id="83332.Rv1657"/>
<dbReference type="PaxDb" id="83332-Rv1657"/>
<dbReference type="DNASU" id="885091"/>
<dbReference type="GeneID" id="885091"/>
<dbReference type="KEGG" id="mtu:Rv1657"/>
<dbReference type="KEGG" id="mtv:RVBD_1657"/>
<dbReference type="TubercuList" id="Rv1657"/>
<dbReference type="eggNOG" id="COG1438">
    <property type="taxonomic scope" value="Bacteria"/>
</dbReference>
<dbReference type="InParanoid" id="P9WPY9"/>
<dbReference type="OrthoDB" id="7060358at2"/>
<dbReference type="PhylomeDB" id="P9WPY9"/>
<dbReference type="UniPathway" id="UPA00068"/>
<dbReference type="EvolutionaryTrace" id="P9WPY9"/>
<dbReference type="Proteomes" id="UP000001584">
    <property type="component" value="Chromosome"/>
</dbReference>
<dbReference type="GO" id="GO:0005737">
    <property type="term" value="C:cytoplasm"/>
    <property type="evidence" value="ECO:0007669"/>
    <property type="project" value="UniProtKB-SubCell"/>
</dbReference>
<dbReference type="GO" id="GO:0005667">
    <property type="term" value="C:transcription regulator complex"/>
    <property type="evidence" value="ECO:0000318"/>
    <property type="project" value="GO_Central"/>
</dbReference>
<dbReference type="GO" id="GO:0034618">
    <property type="term" value="F:arginine binding"/>
    <property type="evidence" value="ECO:0007669"/>
    <property type="project" value="InterPro"/>
</dbReference>
<dbReference type="GO" id="GO:0000987">
    <property type="term" value="F:cis-regulatory region sequence-specific DNA binding"/>
    <property type="evidence" value="ECO:0000318"/>
    <property type="project" value="GO_Central"/>
</dbReference>
<dbReference type="GO" id="GO:0003677">
    <property type="term" value="F:DNA binding"/>
    <property type="evidence" value="ECO:0000314"/>
    <property type="project" value="MTBBASE"/>
</dbReference>
<dbReference type="GO" id="GO:0003700">
    <property type="term" value="F:DNA-binding transcription factor activity"/>
    <property type="evidence" value="ECO:0007669"/>
    <property type="project" value="UniProtKB-UniRule"/>
</dbReference>
<dbReference type="GO" id="GO:0006526">
    <property type="term" value="P:L-arginine biosynthetic process"/>
    <property type="evidence" value="ECO:0007669"/>
    <property type="project" value="UniProtKB-UniPathway"/>
</dbReference>
<dbReference type="GO" id="GO:0051259">
    <property type="term" value="P:protein complex oligomerization"/>
    <property type="evidence" value="ECO:0007669"/>
    <property type="project" value="InterPro"/>
</dbReference>
<dbReference type="GO" id="GO:1900079">
    <property type="term" value="P:regulation of arginine biosynthetic process"/>
    <property type="evidence" value="ECO:0007669"/>
    <property type="project" value="UniProtKB-UniRule"/>
</dbReference>
<dbReference type="GO" id="GO:0000821">
    <property type="term" value="P:regulation of arginine metabolic process"/>
    <property type="evidence" value="ECO:0000318"/>
    <property type="project" value="GO_Central"/>
</dbReference>
<dbReference type="FunFam" id="1.10.10.10:FF:000667">
    <property type="entry name" value="Arginine repressor"/>
    <property type="match status" value="1"/>
</dbReference>
<dbReference type="FunFam" id="3.30.1360.40:FF:000006">
    <property type="entry name" value="Arginine repressor"/>
    <property type="match status" value="1"/>
</dbReference>
<dbReference type="Gene3D" id="3.30.1360.40">
    <property type="match status" value="1"/>
</dbReference>
<dbReference type="Gene3D" id="1.10.10.10">
    <property type="entry name" value="Winged helix-like DNA-binding domain superfamily/Winged helix DNA-binding domain"/>
    <property type="match status" value="1"/>
</dbReference>
<dbReference type="HAMAP" id="MF_00173">
    <property type="entry name" value="Arg_repressor"/>
    <property type="match status" value="1"/>
</dbReference>
<dbReference type="InterPro" id="IPR001669">
    <property type="entry name" value="Arg_repress"/>
</dbReference>
<dbReference type="InterPro" id="IPR020899">
    <property type="entry name" value="Arg_repress_C"/>
</dbReference>
<dbReference type="InterPro" id="IPR036251">
    <property type="entry name" value="Arg_repress_C_sf"/>
</dbReference>
<dbReference type="InterPro" id="IPR020900">
    <property type="entry name" value="Arg_repress_DNA-bd"/>
</dbReference>
<dbReference type="InterPro" id="IPR036388">
    <property type="entry name" value="WH-like_DNA-bd_sf"/>
</dbReference>
<dbReference type="InterPro" id="IPR036390">
    <property type="entry name" value="WH_DNA-bd_sf"/>
</dbReference>
<dbReference type="NCBIfam" id="TIGR01529">
    <property type="entry name" value="argR_whole"/>
    <property type="match status" value="1"/>
</dbReference>
<dbReference type="NCBIfam" id="NF002880">
    <property type="entry name" value="PRK03341.1"/>
    <property type="match status" value="1"/>
</dbReference>
<dbReference type="PANTHER" id="PTHR34471">
    <property type="entry name" value="ARGININE REPRESSOR"/>
    <property type="match status" value="1"/>
</dbReference>
<dbReference type="PANTHER" id="PTHR34471:SF1">
    <property type="entry name" value="ARGININE REPRESSOR"/>
    <property type="match status" value="1"/>
</dbReference>
<dbReference type="Pfam" id="PF01316">
    <property type="entry name" value="Arg_repressor"/>
    <property type="match status" value="1"/>
</dbReference>
<dbReference type="Pfam" id="PF02863">
    <property type="entry name" value="Arg_repressor_C"/>
    <property type="match status" value="1"/>
</dbReference>
<dbReference type="PRINTS" id="PR01467">
    <property type="entry name" value="ARGREPRESSOR"/>
</dbReference>
<dbReference type="SUPFAM" id="SSF55252">
    <property type="entry name" value="C-terminal domain of arginine repressor"/>
    <property type="match status" value="1"/>
</dbReference>
<dbReference type="SUPFAM" id="SSF46785">
    <property type="entry name" value="Winged helix' DNA-binding domain"/>
    <property type="match status" value="1"/>
</dbReference>
<accession>P9WPY9</accession>
<accession>L0T7J6</accession>
<accession>P0A4Y8</accession>
<accession>P94992</accession>
<gene>
    <name type="primary">argR</name>
    <name type="synonym">ahrC</name>
    <name type="ordered locus">Rv1657</name>
    <name type="ORF">MTCY06H11.22</name>
</gene>
<proteinExistence type="evidence at protein level"/>
<name>ARGR_MYCTU</name>
<feature type="chain" id="PRO_0000205104" description="Arginine repressor">
    <location>
        <begin position="1"/>
        <end position="170"/>
    </location>
</feature>
<feature type="helix" evidence="6">
    <location>
        <begin position="18"/>
        <end position="31"/>
    </location>
</feature>
<feature type="helix" evidence="6">
    <location>
        <begin position="37"/>
        <end position="46"/>
    </location>
</feature>
<feature type="helix" evidence="6">
    <location>
        <begin position="53"/>
        <end position="63"/>
    </location>
</feature>
<feature type="strand" evidence="6">
    <location>
        <begin position="66"/>
        <end position="68"/>
    </location>
</feature>
<feature type="strand" evidence="6">
    <location>
        <begin position="77"/>
        <end position="79"/>
    </location>
</feature>
<feature type="strand" evidence="5">
    <location>
        <begin position="87"/>
        <end position="89"/>
    </location>
</feature>
<feature type="turn" evidence="4">
    <location>
        <begin position="90"/>
        <end position="93"/>
    </location>
</feature>
<feature type="helix" evidence="3">
    <location>
        <begin position="95"/>
        <end position="104"/>
    </location>
</feature>
<feature type="strand" evidence="3">
    <location>
        <begin position="107"/>
        <end position="111"/>
    </location>
</feature>
<feature type="strand" evidence="3">
    <location>
        <begin position="114"/>
        <end position="118"/>
    </location>
</feature>
<feature type="turn" evidence="4">
    <location>
        <begin position="121"/>
        <end position="123"/>
    </location>
</feature>
<feature type="helix" evidence="3">
    <location>
        <begin position="124"/>
        <end position="134"/>
    </location>
</feature>
<feature type="strand" evidence="3">
    <location>
        <begin position="139"/>
        <end position="144"/>
    </location>
</feature>
<feature type="strand" evidence="3">
    <location>
        <begin position="146"/>
        <end position="153"/>
    </location>
</feature>
<feature type="helix" evidence="3">
    <location>
        <begin position="159"/>
        <end position="169"/>
    </location>
</feature>
<evidence type="ECO:0000250" key="1"/>
<evidence type="ECO:0000305" key="2"/>
<evidence type="ECO:0007829" key="3">
    <source>
        <dbReference type="PDB" id="2ZFZ"/>
    </source>
</evidence>
<evidence type="ECO:0007829" key="4">
    <source>
        <dbReference type="PDB" id="3ERE"/>
    </source>
</evidence>
<evidence type="ECO:0007829" key="5">
    <source>
        <dbReference type="PDB" id="3LAJ"/>
    </source>
</evidence>
<evidence type="ECO:0007829" key="6">
    <source>
        <dbReference type="PDB" id="3LAP"/>
    </source>
</evidence>
<comment type="function">
    <text evidence="1">Regulates arginine biosynthesis genes.</text>
</comment>
<comment type="pathway">
    <text>Amino-acid biosynthesis; L-arginine biosynthesis [regulation].</text>
</comment>
<comment type="subcellular location">
    <subcellularLocation>
        <location evidence="1">Cytoplasm</location>
    </subcellularLocation>
</comment>
<comment type="similarity">
    <text evidence="2">Belongs to the ArgR family.</text>
</comment>
<sequence length="170" mass="17350">MSRAKAAPVAGPEVAANRAGRQARIVAILSSAQVRSQNELAALLAAEGIEVTQATLSRDLEELGAVKLRGADGGTGIYVVPEDGSPVRGVSGGTDRMARLLGELLVSTDDSGNLAVLRTPPGAAHYLASAIDRAALPQVVGTIAGDDTILVVAREPTTGAQLAGMFENLR</sequence>
<organism>
    <name type="scientific">Mycobacterium tuberculosis (strain ATCC 25618 / H37Rv)</name>
    <dbReference type="NCBI Taxonomy" id="83332"/>
    <lineage>
        <taxon>Bacteria</taxon>
        <taxon>Bacillati</taxon>
        <taxon>Actinomycetota</taxon>
        <taxon>Actinomycetes</taxon>
        <taxon>Mycobacteriales</taxon>
        <taxon>Mycobacteriaceae</taxon>
        <taxon>Mycobacterium</taxon>
        <taxon>Mycobacterium tuberculosis complex</taxon>
    </lineage>
</organism>
<reference key="1">
    <citation type="journal article" date="1998" name="Nature">
        <title>Deciphering the biology of Mycobacterium tuberculosis from the complete genome sequence.</title>
        <authorList>
            <person name="Cole S.T."/>
            <person name="Brosch R."/>
            <person name="Parkhill J."/>
            <person name="Garnier T."/>
            <person name="Churcher C.M."/>
            <person name="Harris D.E."/>
            <person name="Gordon S.V."/>
            <person name="Eiglmeier K."/>
            <person name="Gas S."/>
            <person name="Barry C.E. III"/>
            <person name="Tekaia F."/>
            <person name="Badcock K."/>
            <person name="Basham D."/>
            <person name="Brown D."/>
            <person name="Chillingworth T."/>
            <person name="Connor R."/>
            <person name="Davies R.M."/>
            <person name="Devlin K."/>
            <person name="Feltwell T."/>
            <person name="Gentles S."/>
            <person name="Hamlin N."/>
            <person name="Holroyd S."/>
            <person name="Hornsby T."/>
            <person name="Jagels K."/>
            <person name="Krogh A."/>
            <person name="McLean J."/>
            <person name="Moule S."/>
            <person name="Murphy L.D."/>
            <person name="Oliver S."/>
            <person name="Osborne J."/>
            <person name="Quail M.A."/>
            <person name="Rajandream M.A."/>
            <person name="Rogers J."/>
            <person name="Rutter S."/>
            <person name="Seeger K."/>
            <person name="Skelton S."/>
            <person name="Squares S."/>
            <person name="Squares R."/>
            <person name="Sulston J.E."/>
            <person name="Taylor K."/>
            <person name="Whitehead S."/>
            <person name="Barrell B.G."/>
        </authorList>
    </citation>
    <scope>NUCLEOTIDE SEQUENCE [LARGE SCALE GENOMIC DNA]</scope>
    <source>
        <strain>ATCC 25618 / H37Rv</strain>
    </source>
</reference>
<reference key="2">
    <citation type="journal article" date="2011" name="Mol. Cell. Proteomics">
        <title>Proteogenomic analysis of Mycobacterium tuberculosis by high resolution mass spectrometry.</title>
        <authorList>
            <person name="Kelkar D.S."/>
            <person name="Kumar D."/>
            <person name="Kumar P."/>
            <person name="Balakrishnan L."/>
            <person name="Muthusamy B."/>
            <person name="Yadav A.K."/>
            <person name="Shrivastava P."/>
            <person name="Marimuthu A."/>
            <person name="Anand S."/>
            <person name="Sundaram H."/>
            <person name="Kingsbury R."/>
            <person name="Harsha H.C."/>
            <person name="Nair B."/>
            <person name="Prasad T.S."/>
            <person name="Chauhan D.S."/>
            <person name="Katoch K."/>
            <person name="Katoch V.M."/>
            <person name="Kumar P."/>
            <person name="Chaerkady R."/>
            <person name="Ramachandran S."/>
            <person name="Dash D."/>
            <person name="Pandey A."/>
        </authorList>
    </citation>
    <scope>IDENTIFICATION BY MASS SPECTROMETRY [LARGE SCALE ANALYSIS]</scope>
    <source>
        <strain>ATCC 25618 / H37Rv</strain>
    </source>
</reference>